<sequence length="336" mass="37024">MFARQVIRPARQLQQHVRRYASEAPQSGGSSNGALYVGIGAAGLAGAYIYMRGGKPAAPLSEEANKVAAKVGGASKKAFTGGDQGFISLLLDKSEVVNHNTKKLTFKLPEPDMESGLPVTSAVITKYKGPEMEKPVIRPYTPVSDVDQQGTVDFIVKKYEKGPMSSHMHNMEPGQRLDIKGPIPKYPWSPNKHEHIALIAGGTGITPMWQTARAIFKNPEDKTKVTLVFGNISEEDILLKKEWEHLENTYPQRFRAFYVLDNPPESWQGGKGFITKELLKTVLPEPKEGEKVKIFVCGPPGMYKAISGGKKSPSDQGELDGYLKELGYSKDQVYKF</sequence>
<dbReference type="EC" id="1.6.2.2"/>
<dbReference type="EMBL" id="CH445343">
    <property type="protein sequence ID" value="EAT81157.1"/>
    <property type="molecule type" value="Genomic_DNA"/>
</dbReference>
<dbReference type="RefSeq" id="XP_001801691.1">
    <property type="nucleotide sequence ID" value="XM_001801639.1"/>
</dbReference>
<dbReference type="SMR" id="Q0U9W5"/>
<dbReference type="FunCoup" id="Q0U9W5">
    <property type="interactions" value="286"/>
</dbReference>
<dbReference type="STRING" id="321614.Q0U9W5"/>
<dbReference type="EnsemblFungi" id="SNOT_11449">
    <property type="protein sequence ID" value="SNOT_11449"/>
    <property type="gene ID" value="SNOG_11449"/>
</dbReference>
<dbReference type="GeneID" id="5978599"/>
<dbReference type="KEGG" id="pno:SNOG_11449"/>
<dbReference type="VEuPathDB" id="FungiDB:JI435_114490"/>
<dbReference type="eggNOG" id="KOG0534">
    <property type="taxonomic scope" value="Eukaryota"/>
</dbReference>
<dbReference type="HOGENOM" id="CLU_003827_9_1_1"/>
<dbReference type="InParanoid" id="Q0U9W5"/>
<dbReference type="OMA" id="KGPEMQK"/>
<dbReference type="OrthoDB" id="432685at2759"/>
<dbReference type="Proteomes" id="UP000001055">
    <property type="component" value="Unassembled WGS sequence"/>
</dbReference>
<dbReference type="GO" id="GO:0005741">
    <property type="term" value="C:mitochondrial outer membrane"/>
    <property type="evidence" value="ECO:0007669"/>
    <property type="project" value="UniProtKB-SubCell"/>
</dbReference>
<dbReference type="GO" id="GO:0004128">
    <property type="term" value="F:cytochrome-b5 reductase activity, acting on NAD(P)H"/>
    <property type="evidence" value="ECO:0000318"/>
    <property type="project" value="GO_Central"/>
</dbReference>
<dbReference type="GO" id="GO:0006696">
    <property type="term" value="P:ergosterol biosynthetic process"/>
    <property type="evidence" value="ECO:0000318"/>
    <property type="project" value="GO_Central"/>
</dbReference>
<dbReference type="CDD" id="cd06183">
    <property type="entry name" value="cyt_b5_reduct_like"/>
    <property type="match status" value="1"/>
</dbReference>
<dbReference type="FunFam" id="2.40.30.10:FF:000032">
    <property type="entry name" value="NADH-cytochrome b5 reductase"/>
    <property type="match status" value="1"/>
</dbReference>
<dbReference type="FunFam" id="3.40.50.80:FF:000009">
    <property type="entry name" value="NADH-cytochrome b5 reductase"/>
    <property type="match status" value="1"/>
</dbReference>
<dbReference type="Gene3D" id="3.40.50.80">
    <property type="entry name" value="Nucleotide-binding domain of ferredoxin-NADP reductase (FNR) module"/>
    <property type="match status" value="1"/>
</dbReference>
<dbReference type="Gene3D" id="2.40.30.10">
    <property type="entry name" value="Translation factors"/>
    <property type="match status" value="1"/>
</dbReference>
<dbReference type="InterPro" id="IPR001834">
    <property type="entry name" value="CBR-like"/>
</dbReference>
<dbReference type="InterPro" id="IPR008333">
    <property type="entry name" value="Cbr1-like_FAD-bd_dom"/>
</dbReference>
<dbReference type="InterPro" id="IPR017927">
    <property type="entry name" value="FAD-bd_FR_type"/>
</dbReference>
<dbReference type="InterPro" id="IPR001709">
    <property type="entry name" value="Flavoprot_Pyr_Nucl_cyt_Rdtase"/>
</dbReference>
<dbReference type="InterPro" id="IPR039261">
    <property type="entry name" value="FNR_nucleotide-bd"/>
</dbReference>
<dbReference type="InterPro" id="IPR001433">
    <property type="entry name" value="OxRdtase_FAD/NAD-bd"/>
</dbReference>
<dbReference type="InterPro" id="IPR017938">
    <property type="entry name" value="Riboflavin_synthase-like_b-brl"/>
</dbReference>
<dbReference type="PANTHER" id="PTHR19370">
    <property type="entry name" value="NADH-CYTOCHROME B5 REDUCTASE"/>
    <property type="match status" value="1"/>
</dbReference>
<dbReference type="PANTHER" id="PTHR19370:SF171">
    <property type="entry name" value="NADH-CYTOCHROME B5 REDUCTASE 2"/>
    <property type="match status" value="1"/>
</dbReference>
<dbReference type="Pfam" id="PF00970">
    <property type="entry name" value="FAD_binding_6"/>
    <property type="match status" value="1"/>
</dbReference>
<dbReference type="Pfam" id="PF00175">
    <property type="entry name" value="NAD_binding_1"/>
    <property type="match status" value="1"/>
</dbReference>
<dbReference type="PRINTS" id="PR00406">
    <property type="entry name" value="CYTB5RDTASE"/>
</dbReference>
<dbReference type="PRINTS" id="PR00371">
    <property type="entry name" value="FPNCR"/>
</dbReference>
<dbReference type="SUPFAM" id="SSF52343">
    <property type="entry name" value="Ferredoxin reductase-like, C-terminal NADP-linked domain"/>
    <property type="match status" value="1"/>
</dbReference>
<dbReference type="SUPFAM" id="SSF63380">
    <property type="entry name" value="Riboflavin synthase domain-like"/>
    <property type="match status" value="1"/>
</dbReference>
<dbReference type="PROSITE" id="PS51384">
    <property type="entry name" value="FAD_FR"/>
    <property type="match status" value="1"/>
</dbReference>
<protein>
    <recommendedName>
        <fullName>NADH-cytochrome b5 reductase 2</fullName>
        <ecNumber>1.6.2.2</ecNumber>
    </recommendedName>
    <alternativeName>
        <fullName>Mitochondrial cytochrome b reductase</fullName>
    </alternativeName>
</protein>
<evidence type="ECO:0000250" key="1"/>
<evidence type="ECO:0000255" key="2"/>
<evidence type="ECO:0000255" key="3">
    <source>
        <dbReference type="PROSITE-ProRule" id="PRU00716"/>
    </source>
</evidence>
<evidence type="ECO:0000305" key="4"/>
<feature type="chain" id="PRO_0000330187" description="NADH-cytochrome b5 reductase 2">
    <location>
        <begin position="1"/>
        <end position="336"/>
    </location>
</feature>
<feature type="transmembrane region" description="Helical" evidence="2">
    <location>
        <begin position="28"/>
        <end position="50"/>
    </location>
</feature>
<feature type="domain" description="FAD-binding FR-type" evidence="3">
    <location>
        <begin position="84"/>
        <end position="189"/>
    </location>
</feature>
<feature type="binding site" evidence="1">
    <location>
        <begin position="192"/>
        <end position="227"/>
    </location>
    <ligand>
        <name>FAD</name>
        <dbReference type="ChEBI" id="CHEBI:57692"/>
    </ligand>
</feature>
<name>MCR1_PHANO</name>
<reference key="1">
    <citation type="journal article" date="2007" name="Plant Cell">
        <title>Dothideomycete-plant interactions illuminated by genome sequencing and EST analysis of the wheat pathogen Stagonospora nodorum.</title>
        <authorList>
            <person name="Hane J.K."/>
            <person name="Lowe R.G.T."/>
            <person name="Solomon P.S."/>
            <person name="Tan K.-C."/>
            <person name="Schoch C.L."/>
            <person name="Spatafora J.W."/>
            <person name="Crous P.W."/>
            <person name="Kodira C.D."/>
            <person name="Birren B.W."/>
            <person name="Galagan J.E."/>
            <person name="Torriani S.F.F."/>
            <person name="McDonald B.A."/>
            <person name="Oliver R.P."/>
        </authorList>
    </citation>
    <scope>NUCLEOTIDE SEQUENCE [LARGE SCALE GENOMIC DNA]</scope>
    <source>
        <strain>SN15 / ATCC MYA-4574 / FGSC 10173</strain>
    </source>
</reference>
<accession>Q0U9W5</accession>
<keyword id="KW-0274">FAD</keyword>
<keyword id="KW-0285">Flavoprotein</keyword>
<keyword id="KW-0472">Membrane</keyword>
<keyword id="KW-0496">Mitochondrion</keyword>
<keyword id="KW-1000">Mitochondrion outer membrane</keyword>
<keyword id="KW-0520">NAD</keyword>
<keyword id="KW-0560">Oxidoreductase</keyword>
<keyword id="KW-0812">Transmembrane</keyword>
<keyword id="KW-1133">Transmembrane helix</keyword>
<comment type="function">
    <text evidence="1">May mediate the reduction of outer membrane cytochrome b5.</text>
</comment>
<comment type="catalytic activity">
    <reaction>
        <text>2 Fe(III)-[cytochrome b5] + NADH = 2 Fe(II)-[cytochrome b5] + NAD(+) + H(+)</text>
        <dbReference type="Rhea" id="RHEA:46680"/>
        <dbReference type="Rhea" id="RHEA-COMP:10438"/>
        <dbReference type="Rhea" id="RHEA-COMP:10439"/>
        <dbReference type="ChEBI" id="CHEBI:15378"/>
        <dbReference type="ChEBI" id="CHEBI:29033"/>
        <dbReference type="ChEBI" id="CHEBI:29034"/>
        <dbReference type="ChEBI" id="CHEBI:57540"/>
        <dbReference type="ChEBI" id="CHEBI:57945"/>
        <dbReference type="EC" id="1.6.2.2"/>
    </reaction>
</comment>
<comment type="cofactor">
    <cofactor evidence="1">
        <name>FAD</name>
        <dbReference type="ChEBI" id="CHEBI:57692"/>
    </cofactor>
</comment>
<comment type="subcellular location">
    <subcellularLocation>
        <location evidence="1">Mitochondrion outer membrane</location>
        <topology evidence="1">Single-pass membrane protein</topology>
    </subcellularLocation>
</comment>
<comment type="similarity">
    <text evidence="4">Belongs to the flavoprotein pyridine nucleotide cytochrome reductase family.</text>
</comment>
<organism>
    <name type="scientific">Phaeosphaeria nodorum (strain SN15 / ATCC MYA-4574 / FGSC 10173)</name>
    <name type="common">Glume blotch fungus</name>
    <name type="synonym">Parastagonospora nodorum</name>
    <dbReference type="NCBI Taxonomy" id="321614"/>
    <lineage>
        <taxon>Eukaryota</taxon>
        <taxon>Fungi</taxon>
        <taxon>Dikarya</taxon>
        <taxon>Ascomycota</taxon>
        <taxon>Pezizomycotina</taxon>
        <taxon>Dothideomycetes</taxon>
        <taxon>Pleosporomycetidae</taxon>
        <taxon>Pleosporales</taxon>
        <taxon>Pleosporineae</taxon>
        <taxon>Phaeosphaeriaceae</taxon>
        <taxon>Parastagonospora</taxon>
    </lineage>
</organism>
<gene>
    <name type="primary">MCR1</name>
    <name type="ORF">SNOG_11449</name>
</gene>
<proteinExistence type="inferred from homology"/>